<name>CBP4_VANPO</name>
<feature type="chain" id="PRO_0000330139" description="Assembly factor CBP4">
    <location>
        <begin position="1"/>
        <end position="144"/>
    </location>
</feature>
<feature type="transmembrane region" description="Helical" evidence="2">
    <location>
        <begin position="5"/>
        <end position="27"/>
    </location>
</feature>
<feature type="coiled-coil region" evidence="2">
    <location>
        <begin position="106"/>
        <end position="139"/>
    </location>
</feature>
<dbReference type="EMBL" id="DS480383">
    <property type="protein sequence ID" value="EDO19020.1"/>
    <property type="molecule type" value="Genomic_DNA"/>
</dbReference>
<dbReference type="RefSeq" id="XP_001646878.1">
    <property type="nucleotide sequence ID" value="XM_001646828.1"/>
</dbReference>
<dbReference type="SMR" id="A7TFK6"/>
<dbReference type="FunCoup" id="A7TFK6">
    <property type="interactions" value="61"/>
</dbReference>
<dbReference type="STRING" id="436907.A7TFK6"/>
<dbReference type="GeneID" id="5547347"/>
<dbReference type="KEGG" id="vpo:Kpol_2002p91"/>
<dbReference type="eggNOG" id="ENOG502S2G8">
    <property type="taxonomic scope" value="Eukaryota"/>
</dbReference>
<dbReference type="HOGENOM" id="CLU_147520_0_0_1"/>
<dbReference type="InParanoid" id="A7TFK6"/>
<dbReference type="OMA" id="KDPIWKT"/>
<dbReference type="OrthoDB" id="5576752at2759"/>
<dbReference type="PhylomeDB" id="A7TFK6"/>
<dbReference type="Proteomes" id="UP000000267">
    <property type="component" value="Unassembled WGS sequence"/>
</dbReference>
<dbReference type="GO" id="GO:0005743">
    <property type="term" value="C:mitochondrial inner membrane"/>
    <property type="evidence" value="ECO:0007669"/>
    <property type="project" value="UniProtKB-SubCell"/>
</dbReference>
<dbReference type="GO" id="GO:0034551">
    <property type="term" value="P:mitochondrial respiratory chain complex III assembly"/>
    <property type="evidence" value="ECO:0007669"/>
    <property type="project" value="TreeGrafter"/>
</dbReference>
<dbReference type="InterPro" id="IPR012420">
    <property type="entry name" value="Cbp4"/>
</dbReference>
<dbReference type="PANTHER" id="PTHR28202">
    <property type="entry name" value="ASSEMBLY FACTOR CBP4"/>
    <property type="match status" value="1"/>
</dbReference>
<dbReference type="PANTHER" id="PTHR28202:SF1">
    <property type="entry name" value="ASSEMBLY FACTOR CBP4"/>
    <property type="match status" value="1"/>
</dbReference>
<dbReference type="Pfam" id="PF07960">
    <property type="entry name" value="CBP4"/>
    <property type="match status" value="1"/>
</dbReference>
<keyword id="KW-0143">Chaperone</keyword>
<keyword id="KW-0175">Coiled coil</keyword>
<keyword id="KW-0472">Membrane</keyword>
<keyword id="KW-0496">Mitochondrion</keyword>
<keyword id="KW-0999">Mitochondrion inner membrane</keyword>
<keyword id="KW-1185">Reference proteome</keyword>
<keyword id="KW-0812">Transmembrane</keyword>
<keyword id="KW-1133">Transmembrane helix</keyword>
<evidence type="ECO:0000250" key="1"/>
<evidence type="ECO:0000255" key="2"/>
<evidence type="ECO:0000305" key="3"/>
<organism>
    <name type="scientific">Vanderwaltozyma polyspora (strain ATCC 22028 / DSM 70294 / BCRC 21397 / CBS 2163 / NBRC 10782 / NRRL Y-8283 / UCD 57-17)</name>
    <name type="common">Kluyveromyces polysporus</name>
    <dbReference type="NCBI Taxonomy" id="436907"/>
    <lineage>
        <taxon>Eukaryota</taxon>
        <taxon>Fungi</taxon>
        <taxon>Dikarya</taxon>
        <taxon>Ascomycota</taxon>
        <taxon>Saccharomycotina</taxon>
        <taxon>Saccharomycetes</taxon>
        <taxon>Saccharomycetales</taxon>
        <taxon>Saccharomycetaceae</taxon>
        <taxon>Vanderwaltozyma</taxon>
    </lineage>
</organism>
<proteinExistence type="inferred from homology"/>
<reference key="1">
    <citation type="journal article" date="2007" name="Proc. Natl. Acad. Sci. U.S.A.">
        <title>Independent sorting-out of thousands of duplicated gene pairs in two yeast species descended from a whole-genome duplication.</title>
        <authorList>
            <person name="Scannell D.R."/>
            <person name="Frank A.C."/>
            <person name="Conant G.C."/>
            <person name="Byrne K.P."/>
            <person name="Woolfit M."/>
            <person name="Wolfe K.H."/>
        </authorList>
    </citation>
    <scope>NUCLEOTIDE SEQUENCE [LARGE SCALE GENOMIC DNA]</scope>
    <source>
        <strain>ATCC 22028 / DSM 70294 / BCRC 21397 / CBS 2163 / NBRC 10782 / NRRL Y-8283 / UCD 57-17</strain>
    </source>
</reference>
<gene>
    <name type="primary">CBP4</name>
    <name type="ORF">Kpol_2002p91</name>
</gene>
<comment type="function">
    <text evidence="1">Essential for the assembly of ubiquinol-cytochrome c reductase. It has a direct effect on the correct occurrence of the Rieske protein, core 4, core 5 and apocytochrome b (By similarity).</text>
</comment>
<comment type="subcellular location">
    <subcellularLocation>
        <location evidence="1">Mitochondrion inner membrane</location>
        <topology evidence="1">Single-pass membrane protein</topology>
    </subcellularLocation>
</comment>
<comment type="similarity">
    <text evidence="3">Belongs to the CBP4 family.</text>
</comment>
<protein>
    <recommendedName>
        <fullName>Assembly factor CBP4</fullName>
    </recommendedName>
    <alternativeName>
        <fullName>Cytochrome b mRNA-processing protein 4</fullName>
    </alternativeName>
</protein>
<sequence>MESPLWVRWLKVYAVGGVIIGSGALLFKYTTPTDEQLIASLSPELRLQYETERKLRQAEQQELMKIVQTTAESDQPIWKTGPIKSPWEKDTETVQQKEMFQKARADVAQREELQRIRKELAEIRQKSEQKTQEIVNTKSWWKFW</sequence>
<accession>A7TFK6</accession>